<sequence length="315" mass="36549">MMQSSKWNAMSLLMDEKTKQAEVLRTAIDEADAIVIGIGAGMSASDGFTYVGERFTENFPDFIEKYRFFDMLQASLHPYGSWQEYWAFESRFITLNYLDQPVGQSYLALKSLVEGKQYHIITTNADNAFDAAEYDMTHVFHIQGEYILQQCSQHCHAQTYRNDDLIRKMVVAQQDMLIPWEMIPRCPKCDAPMEVNKRKAEVGMVEDAEFHAQLQRYNAFLEQHQDDKVLYLEIGIGYTTPQFVKHPFQRMTRKNENAIYMTMNKKAYRIPNSIQERTIHLTEDISTLITTALRNDSTTQNNNIGETEDVLNRTD</sequence>
<proteinExistence type="evidence at protein level"/>
<organism>
    <name type="scientific">Staphylococcus aureus (strain Mu50 / ATCC 700699)</name>
    <dbReference type="NCBI Taxonomy" id="158878"/>
    <lineage>
        <taxon>Bacteria</taxon>
        <taxon>Bacillati</taxon>
        <taxon>Bacillota</taxon>
        <taxon>Bacilli</taxon>
        <taxon>Bacillales</taxon>
        <taxon>Staphylococcaceae</taxon>
        <taxon>Staphylococcus</taxon>
    </lineage>
</organism>
<dbReference type="EC" id="2.4.2.-" evidence="3"/>
<dbReference type="EMBL" id="BA000017">
    <property type="protein sequence ID" value="BAB56488.1"/>
    <property type="molecule type" value="Genomic_DNA"/>
</dbReference>
<dbReference type="SMR" id="A0A0H3JQ59"/>
<dbReference type="KEGG" id="sav:SAV0326"/>
<dbReference type="HOGENOM" id="CLU_071599_0_0_9"/>
<dbReference type="Proteomes" id="UP000002481">
    <property type="component" value="Chromosome"/>
</dbReference>
<dbReference type="GO" id="GO:0046872">
    <property type="term" value="F:metal ion binding"/>
    <property type="evidence" value="ECO:0007669"/>
    <property type="project" value="UniProtKB-KW"/>
</dbReference>
<dbReference type="GO" id="GO:1990404">
    <property type="term" value="F:NAD+-protein mono-ADP-ribosyltransferase activity"/>
    <property type="evidence" value="ECO:0000314"/>
    <property type="project" value="UniProtKB"/>
</dbReference>
<dbReference type="GO" id="GO:0140806">
    <property type="term" value="F:NAD+-protein-aspartate ADP-ribosyltransferase activity"/>
    <property type="evidence" value="ECO:0007669"/>
    <property type="project" value="RHEA"/>
</dbReference>
<dbReference type="GO" id="GO:0016779">
    <property type="term" value="F:nucleotidyltransferase activity"/>
    <property type="evidence" value="ECO:0007669"/>
    <property type="project" value="UniProtKB-KW"/>
</dbReference>
<dbReference type="Gene3D" id="3.40.50.1220">
    <property type="entry name" value="TPP-binding domain"/>
    <property type="match status" value="1"/>
</dbReference>
<dbReference type="InterPro" id="IPR029035">
    <property type="entry name" value="DHS-like_NAD/FAD-binding_dom"/>
</dbReference>
<dbReference type="InterPro" id="IPR026590">
    <property type="entry name" value="Ssirtuin_cat_dom"/>
</dbReference>
<dbReference type="SUPFAM" id="SSF52467">
    <property type="entry name" value="DHS-like NAD/FAD-binding domain"/>
    <property type="match status" value="1"/>
</dbReference>
<dbReference type="PROSITE" id="PS50305">
    <property type="entry name" value="SIRTUIN"/>
    <property type="match status" value="1"/>
</dbReference>
<reference key="1">
    <citation type="journal article" date="2001" name="Lancet">
        <title>Whole genome sequencing of meticillin-resistant Staphylococcus aureus.</title>
        <authorList>
            <person name="Kuroda M."/>
            <person name="Ohta T."/>
            <person name="Uchiyama I."/>
            <person name="Baba T."/>
            <person name="Yuzawa H."/>
            <person name="Kobayashi I."/>
            <person name="Cui L."/>
            <person name="Oguchi A."/>
            <person name="Aoki K."/>
            <person name="Nagai Y."/>
            <person name="Lian J.-Q."/>
            <person name="Ito T."/>
            <person name="Kanamori M."/>
            <person name="Matsumaru H."/>
            <person name="Maruyama A."/>
            <person name="Murakami H."/>
            <person name="Hosoyama A."/>
            <person name="Mizutani-Ui Y."/>
            <person name="Takahashi N.K."/>
            <person name="Sawano T."/>
            <person name="Inoue R."/>
            <person name="Kaito C."/>
            <person name="Sekimizu K."/>
            <person name="Hirakawa H."/>
            <person name="Kuhara S."/>
            <person name="Goto S."/>
            <person name="Yabuzaki J."/>
            <person name="Kanehisa M."/>
            <person name="Yamashita A."/>
            <person name="Oshima K."/>
            <person name="Furuya K."/>
            <person name="Yoshino C."/>
            <person name="Shiba T."/>
            <person name="Hattori M."/>
            <person name="Ogasawara N."/>
            <person name="Hayashi H."/>
            <person name="Hiramatsu K."/>
        </authorList>
    </citation>
    <scope>NUCLEOTIDE SEQUENCE [LARGE SCALE GENOMIC DNA]</scope>
    <source>
        <strain>Mu50 / ATCC 700699</strain>
    </source>
</reference>
<reference key="2">
    <citation type="journal article" date="2015" name="Mol. Cell">
        <title>Identification of a class of protein ADP-ribosylating sirtuins in microbial pathogens.</title>
        <authorList>
            <person name="Rack J.G."/>
            <person name="Morra R."/>
            <person name="Barkauskaite E."/>
            <person name="Kraehenbuehl R."/>
            <person name="Ariza A."/>
            <person name="Qu Y."/>
            <person name="Ortmayer M."/>
            <person name="Leidecker O."/>
            <person name="Cameron D.R."/>
            <person name="Matic I."/>
            <person name="Peleg A.Y."/>
            <person name="Leys D."/>
            <person name="Traven A."/>
            <person name="Ahel I."/>
        </authorList>
    </citation>
    <scope>FUNCTION</scope>
    <scope>CATALYTIC ACTIVITY</scope>
    <scope>SUBSTRATE SPECIFICITY</scope>
    <scope>LACK OF PROTEIN DEACYLASE ACTIVITY</scope>
    <scope>ACTIVITY REGULATION</scope>
    <scope>MUTAGENESIS OF ASN-124</scope>
    <source>
        <strain>Mu50 / ATCC 700699</strain>
    </source>
</reference>
<accession>A0A0H3JQ59</accession>
<protein>
    <recommendedName>
        <fullName evidence="4">Protein ADP-ribosyltransferase</fullName>
        <ecNumber evidence="3">2.4.2.-</ecNumber>
    </recommendedName>
    <alternativeName>
        <fullName evidence="4">Sirtuin class M</fullName>
        <shortName evidence="4">SirTM</shortName>
    </alternativeName>
</protein>
<keyword id="KW-0328">Glycosyltransferase</keyword>
<keyword id="KW-0479">Metal-binding</keyword>
<keyword id="KW-0520">NAD</keyword>
<keyword id="KW-0548">Nucleotidyltransferase</keyword>
<keyword id="KW-0808">Transferase</keyword>
<keyword id="KW-0862">Zinc</keyword>
<gene>
    <name evidence="6" type="ordered locus">SAV0326</name>
</gene>
<name>SIRTM_STAAM</name>
<comment type="function">
    <text evidence="3">Catalyzes specifically the mono-ADP-ribosylation of GcvH-L (SAV0324). This activity is dependent on prior lipoylation of the target protein. May be involved in the modulation of the response to host-derived oxidative stress. In contrast to other sirtuin classes, lacks protein deacylase activity, being unable to catalyze delipoylation, debiotinylation, deacetylation and desuccinylation of proteins.</text>
</comment>
<comment type="catalytic activity">
    <reaction evidence="3">
        <text>L-aspartyl-[protein] + NAD(+) = 4-O-(ADP-D-ribosyl)-L-aspartyl-[protein] + nicotinamide</text>
        <dbReference type="Rhea" id="RHEA:54424"/>
        <dbReference type="Rhea" id="RHEA-COMP:9867"/>
        <dbReference type="Rhea" id="RHEA-COMP:13832"/>
        <dbReference type="ChEBI" id="CHEBI:17154"/>
        <dbReference type="ChEBI" id="CHEBI:29961"/>
        <dbReference type="ChEBI" id="CHEBI:57540"/>
        <dbReference type="ChEBI" id="CHEBI:138102"/>
    </reaction>
</comment>
<comment type="cofactor">
    <cofactor evidence="1">
        <name>Zn(2+)</name>
        <dbReference type="ChEBI" id="CHEBI:29105"/>
    </cofactor>
    <text evidence="1">Binds 1 zinc ion per subunit.</text>
</comment>
<comment type="activity regulation">
    <text evidence="3">Is inhibited by Tenovin-6 in vitro, but not by nicotinamide.</text>
</comment>
<comment type="miscellaneous">
    <text evidence="3">The SirTM-mediated ADP-ribosylation can be specifically reversed by the Macro domain-containing protein encoded by the same operon (SAV0325).</text>
</comment>
<comment type="similarity">
    <text evidence="5">Belongs to the sirtuin family. Class M subfamily.</text>
</comment>
<evidence type="ECO:0000250" key="1">
    <source>
        <dbReference type="UniProtKB" id="P0DN71"/>
    </source>
</evidence>
<evidence type="ECO:0000255" key="2">
    <source>
        <dbReference type="PROSITE-ProRule" id="PRU00236"/>
    </source>
</evidence>
<evidence type="ECO:0000269" key="3">
    <source>
    </source>
</evidence>
<evidence type="ECO:0000303" key="4">
    <source>
    </source>
</evidence>
<evidence type="ECO:0000305" key="5">
    <source>
    </source>
</evidence>
<evidence type="ECO:0000312" key="6">
    <source>
        <dbReference type="EMBL" id="BAB56488.1"/>
    </source>
</evidence>
<feature type="chain" id="PRO_0000435345" description="Protein ADP-ribosyltransferase">
    <location>
        <begin position="1"/>
        <end position="315"/>
    </location>
</feature>
<feature type="domain" description="Deacetylase sirtuin-type" evidence="2">
    <location>
        <begin position="13"/>
        <end position="299"/>
    </location>
</feature>
<feature type="binding site" evidence="1">
    <location>
        <position position="40"/>
    </location>
    <ligand>
        <name>NAD(+)</name>
        <dbReference type="ChEBI" id="CHEBI:57540"/>
    </ligand>
</feature>
<feature type="binding site" evidence="1">
    <location>
        <begin position="123"/>
        <end position="126"/>
    </location>
    <ligand>
        <name>NAD(+)</name>
        <dbReference type="ChEBI" id="CHEBI:57540"/>
    </ligand>
</feature>
<feature type="binding site" evidence="1">
    <location>
        <position position="143"/>
    </location>
    <ligand>
        <name>NAD(+)</name>
        <dbReference type="ChEBI" id="CHEBI:57540"/>
    </ligand>
</feature>
<feature type="binding site" evidence="2">
    <location>
        <position position="151"/>
    </location>
    <ligand>
        <name>Zn(2+)</name>
        <dbReference type="ChEBI" id="CHEBI:29105"/>
    </ligand>
</feature>
<feature type="binding site" evidence="2">
    <location>
        <position position="155"/>
    </location>
    <ligand>
        <name>Zn(2+)</name>
        <dbReference type="ChEBI" id="CHEBI:29105"/>
    </ligand>
</feature>
<feature type="binding site" evidence="2">
    <location>
        <position position="186"/>
    </location>
    <ligand>
        <name>Zn(2+)</name>
        <dbReference type="ChEBI" id="CHEBI:29105"/>
    </ligand>
</feature>
<feature type="binding site" evidence="2">
    <location>
        <position position="189"/>
    </location>
    <ligand>
        <name>Zn(2+)</name>
        <dbReference type="ChEBI" id="CHEBI:29105"/>
    </ligand>
</feature>
<feature type="binding site" evidence="1">
    <location>
        <begin position="238"/>
        <end position="240"/>
    </location>
    <ligand>
        <name>NAD(+)</name>
        <dbReference type="ChEBI" id="CHEBI:57540"/>
    </ligand>
</feature>
<feature type="binding site" evidence="1">
    <location>
        <position position="264"/>
    </location>
    <ligand>
        <name>NAD(+)</name>
        <dbReference type="ChEBI" id="CHEBI:57540"/>
    </ligand>
</feature>
<feature type="binding site" evidence="1">
    <location>
        <position position="268"/>
    </location>
    <ligand>
        <name>NAD(+)</name>
        <dbReference type="ChEBI" id="CHEBI:57540"/>
    </ligand>
</feature>
<feature type="binding site" evidence="1">
    <location>
        <position position="285"/>
    </location>
    <ligand>
        <name>NAD(+)</name>
        <dbReference type="ChEBI" id="CHEBI:57540"/>
    </ligand>
</feature>
<feature type="mutagenesis site" description="Loss of catalytic activity." evidence="3">
    <original>N</original>
    <variation>A</variation>
    <location>
        <position position="124"/>
    </location>
</feature>